<reference key="1">
    <citation type="journal article" date="2007" name="Proc. Natl. Acad. Sci. U.S.A.">
        <title>Genome plasticity of BCG and impact on vaccine efficacy.</title>
        <authorList>
            <person name="Brosch R."/>
            <person name="Gordon S.V."/>
            <person name="Garnier T."/>
            <person name="Eiglmeier K."/>
            <person name="Frigui W."/>
            <person name="Valenti P."/>
            <person name="Dos Santos S."/>
            <person name="Duthoy S."/>
            <person name="Lacroix C."/>
            <person name="Garcia-Pelayo C."/>
            <person name="Inwald J.K."/>
            <person name="Golby P."/>
            <person name="Garcia J.N."/>
            <person name="Hewinson R.G."/>
            <person name="Behr M.A."/>
            <person name="Quail M.A."/>
            <person name="Churcher C."/>
            <person name="Barrell B.G."/>
            <person name="Parkhill J."/>
            <person name="Cole S.T."/>
        </authorList>
    </citation>
    <scope>NUCLEOTIDE SEQUENCE [LARGE SCALE GENOMIC DNA]</scope>
    <source>
        <strain>BCG / Pasteur 1173P2</strain>
    </source>
</reference>
<protein>
    <recommendedName>
        <fullName evidence="1">S-adenosylmethionine synthase</fullName>
        <shortName evidence="1">AdoMet synthase</shortName>
        <ecNumber evidence="1">2.5.1.6</ecNumber>
    </recommendedName>
    <alternativeName>
        <fullName evidence="1">MAT</fullName>
    </alternativeName>
    <alternativeName>
        <fullName evidence="1">Methionine adenosyltransferase</fullName>
    </alternativeName>
</protein>
<name>METK_MYCBP</name>
<sequence length="403" mass="43019">MSEKGRLFTSESVTEGHPDKICDAISDSVLDALLAADPRSRVAVETLVTTGQVHVVGEVTTSAKEAFADITNTVRARILEIGYDSSDKGFDGATCGVNIGIGAQSPDIAQGVDTAHEARVEGAADPLDSQGAGDQGLMFGYAINATPELMPLPIALAHRLSRRLTEVRKNGVLPYLRPDGKTQVTIAYEDNVPVQLDTVVISTQHAADIDLEKTLDPDIREKVLNTVLDDLAHETLDASTVRVLVNPTGKFVLGGPMGDAGLTGRKIIVDTYGGWARHGGGAFSGKDPSKVDRSAAYAMRWVAKNVVAAGLAERVEVQVAYAIGKAAPVGLFVETFGTETEDPVKIEKAIGEVFDLRPGAIIRDLNLLRPIYAPTAAYGHFGRTDVELPWEQLDKVDDLKRAI</sequence>
<evidence type="ECO:0000255" key="1">
    <source>
        <dbReference type="HAMAP-Rule" id="MF_00086"/>
    </source>
</evidence>
<dbReference type="EC" id="2.5.1.6" evidence="1"/>
<dbReference type="EMBL" id="AM408590">
    <property type="protein sequence ID" value="CAL71440.1"/>
    <property type="molecule type" value="Genomic_DNA"/>
</dbReference>
<dbReference type="RefSeq" id="WP_011799178.1">
    <property type="nucleotide sequence ID" value="NC_008769.1"/>
</dbReference>
<dbReference type="SMR" id="A1KII1"/>
<dbReference type="KEGG" id="mbb:BCG_1453"/>
<dbReference type="HOGENOM" id="CLU_041802_1_1_11"/>
<dbReference type="UniPathway" id="UPA00315">
    <property type="reaction ID" value="UER00080"/>
</dbReference>
<dbReference type="Proteomes" id="UP000001472">
    <property type="component" value="Chromosome"/>
</dbReference>
<dbReference type="GO" id="GO:0005737">
    <property type="term" value="C:cytoplasm"/>
    <property type="evidence" value="ECO:0007669"/>
    <property type="project" value="UniProtKB-SubCell"/>
</dbReference>
<dbReference type="GO" id="GO:0005524">
    <property type="term" value="F:ATP binding"/>
    <property type="evidence" value="ECO:0007669"/>
    <property type="project" value="UniProtKB-UniRule"/>
</dbReference>
<dbReference type="GO" id="GO:0000287">
    <property type="term" value="F:magnesium ion binding"/>
    <property type="evidence" value="ECO:0007669"/>
    <property type="project" value="UniProtKB-UniRule"/>
</dbReference>
<dbReference type="GO" id="GO:0004478">
    <property type="term" value="F:methionine adenosyltransferase activity"/>
    <property type="evidence" value="ECO:0007669"/>
    <property type="project" value="UniProtKB-UniRule"/>
</dbReference>
<dbReference type="GO" id="GO:0006730">
    <property type="term" value="P:one-carbon metabolic process"/>
    <property type="evidence" value="ECO:0007669"/>
    <property type="project" value="UniProtKB-KW"/>
</dbReference>
<dbReference type="GO" id="GO:0006556">
    <property type="term" value="P:S-adenosylmethionine biosynthetic process"/>
    <property type="evidence" value="ECO:0007669"/>
    <property type="project" value="UniProtKB-UniRule"/>
</dbReference>
<dbReference type="CDD" id="cd18079">
    <property type="entry name" value="S-AdoMet_synt"/>
    <property type="match status" value="1"/>
</dbReference>
<dbReference type="FunFam" id="3.30.300.10:FF:000006">
    <property type="entry name" value="S-adenosylmethionine synthase"/>
    <property type="match status" value="1"/>
</dbReference>
<dbReference type="Gene3D" id="3.30.300.10">
    <property type="match status" value="3"/>
</dbReference>
<dbReference type="HAMAP" id="MF_00086">
    <property type="entry name" value="S_AdoMet_synth1"/>
    <property type="match status" value="1"/>
</dbReference>
<dbReference type="InterPro" id="IPR022631">
    <property type="entry name" value="ADOMET_SYNTHASE_CS"/>
</dbReference>
<dbReference type="InterPro" id="IPR022630">
    <property type="entry name" value="S-AdoMet_synt_C"/>
</dbReference>
<dbReference type="InterPro" id="IPR022629">
    <property type="entry name" value="S-AdoMet_synt_central"/>
</dbReference>
<dbReference type="InterPro" id="IPR022628">
    <property type="entry name" value="S-AdoMet_synt_N"/>
</dbReference>
<dbReference type="InterPro" id="IPR002133">
    <property type="entry name" value="S-AdoMet_synthetase"/>
</dbReference>
<dbReference type="InterPro" id="IPR022636">
    <property type="entry name" value="S-AdoMet_synthetase_sfam"/>
</dbReference>
<dbReference type="NCBIfam" id="TIGR01034">
    <property type="entry name" value="metK"/>
    <property type="match status" value="1"/>
</dbReference>
<dbReference type="PANTHER" id="PTHR11964">
    <property type="entry name" value="S-ADENOSYLMETHIONINE SYNTHETASE"/>
    <property type="match status" value="1"/>
</dbReference>
<dbReference type="Pfam" id="PF02773">
    <property type="entry name" value="S-AdoMet_synt_C"/>
    <property type="match status" value="1"/>
</dbReference>
<dbReference type="Pfam" id="PF02772">
    <property type="entry name" value="S-AdoMet_synt_M"/>
    <property type="match status" value="1"/>
</dbReference>
<dbReference type="Pfam" id="PF00438">
    <property type="entry name" value="S-AdoMet_synt_N"/>
    <property type="match status" value="1"/>
</dbReference>
<dbReference type="PIRSF" id="PIRSF000497">
    <property type="entry name" value="MAT"/>
    <property type="match status" value="1"/>
</dbReference>
<dbReference type="SUPFAM" id="SSF55973">
    <property type="entry name" value="S-adenosylmethionine synthetase"/>
    <property type="match status" value="3"/>
</dbReference>
<dbReference type="PROSITE" id="PS00376">
    <property type="entry name" value="ADOMET_SYNTHASE_1"/>
    <property type="match status" value="1"/>
</dbReference>
<dbReference type="PROSITE" id="PS00377">
    <property type="entry name" value="ADOMET_SYNTHASE_2"/>
    <property type="match status" value="1"/>
</dbReference>
<comment type="function">
    <text evidence="1">Catalyzes the formation of S-adenosylmethionine (AdoMet) from methionine and ATP. The overall synthetic reaction is composed of two sequential steps, AdoMet formation and the subsequent tripolyphosphate hydrolysis which occurs prior to release of AdoMet from the enzyme.</text>
</comment>
<comment type="catalytic activity">
    <reaction evidence="1">
        <text>L-methionine + ATP + H2O = S-adenosyl-L-methionine + phosphate + diphosphate</text>
        <dbReference type="Rhea" id="RHEA:21080"/>
        <dbReference type="ChEBI" id="CHEBI:15377"/>
        <dbReference type="ChEBI" id="CHEBI:30616"/>
        <dbReference type="ChEBI" id="CHEBI:33019"/>
        <dbReference type="ChEBI" id="CHEBI:43474"/>
        <dbReference type="ChEBI" id="CHEBI:57844"/>
        <dbReference type="ChEBI" id="CHEBI:59789"/>
        <dbReference type="EC" id="2.5.1.6"/>
    </reaction>
</comment>
<comment type="cofactor">
    <cofactor evidence="1">
        <name>Mg(2+)</name>
        <dbReference type="ChEBI" id="CHEBI:18420"/>
    </cofactor>
    <text evidence="1">Binds 2 divalent ions per subunit.</text>
</comment>
<comment type="cofactor">
    <cofactor evidence="1">
        <name>K(+)</name>
        <dbReference type="ChEBI" id="CHEBI:29103"/>
    </cofactor>
    <text evidence="1">Binds 1 potassium ion per subunit.</text>
</comment>
<comment type="pathway">
    <text evidence="1">Amino-acid biosynthesis; S-adenosyl-L-methionine biosynthesis; S-adenosyl-L-methionine from L-methionine: step 1/1.</text>
</comment>
<comment type="subunit">
    <text evidence="1">Homotetramer; dimer of dimers.</text>
</comment>
<comment type="subcellular location">
    <subcellularLocation>
        <location evidence="1">Cytoplasm</location>
    </subcellularLocation>
</comment>
<comment type="similarity">
    <text evidence="1">Belongs to the AdoMet synthase family.</text>
</comment>
<feature type="chain" id="PRO_0000302940" description="S-adenosylmethionine synthase">
    <location>
        <begin position="1"/>
        <end position="403"/>
    </location>
</feature>
<feature type="region of interest" description="Flexible loop" evidence="1">
    <location>
        <begin position="104"/>
        <end position="114"/>
    </location>
</feature>
<feature type="binding site" description="in other chain" evidence="1">
    <location>
        <position position="17"/>
    </location>
    <ligand>
        <name>ATP</name>
        <dbReference type="ChEBI" id="CHEBI:30616"/>
        <note>ligand shared between two neighboring subunits</note>
    </ligand>
</feature>
<feature type="binding site" evidence="1">
    <location>
        <position position="19"/>
    </location>
    <ligand>
        <name>Mg(2+)</name>
        <dbReference type="ChEBI" id="CHEBI:18420"/>
    </ligand>
</feature>
<feature type="binding site" evidence="1">
    <location>
        <position position="45"/>
    </location>
    <ligand>
        <name>K(+)</name>
        <dbReference type="ChEBI" id="CHEBI:29103"/>
    </ligand>
</feature>
<feature type="binding site" description="in other chain" evidence="1">
    <location>
        <position position="58"/>
    </location>
    <ligand>
        <name>L-methionine</name>
        <dbReference type="ChEBI" id="CHEBI:57844"/>
        <note>ligand shared between two neighboring subunits</note>
    </ligand>
</feature>
<feature type="binding site" description="in other chain" evidence="1">
    <location>
        <position position="104"/>
    </location>
    <ligand>
        <name>L-methionine</name>
        <dbReference type="ChEBI" id="CHEBI:57844"/>
        <note>ligand shared between two neighboring subunits</note>
    </ligand>
</feature>
<feature type="binding site" description="in other chain" evidence="1">
    <location>
        <begin position="179"/>
        <end position="181"/>
    </location>
    <ligand>
        <name>ATP</name>
        <dbReference type="ChEBI" id="CHEBI:30616"/>
        <note>ligand shared between two neighboring subunits</note>
    </ligand>
</feature>
<feature type="binding site" description="in other chain" evidence="1">
    <location>
        <begin position="250"/>
        <end position="251"/>
    </location>
    <ligand>
        <name>ATP</name>
        <dbReference type="ChEBI" id="CHEBI:30616"/>
        <note>ligand shared between two neighboring subunits</note>
    </ligand>
</feature>
<feature type="binding site" evidence="1">
    <location>
        <position position="259"/>
    </location>
    <ligand>
        <name>ATP</name>
        <dbReference type="ChEBI" id="CHEBI:30616"/>
        <note>ligand shared between two neighboring subunits</note>
    </ligand>
</feature>
<feature type="binding site" evidence="1">
    <location>
        <position position="259"/>
    </location>
    <ligand>
        <name>L-methionine</name>
        <dbReference type="ChEBI" id="CHEBI:57844"/>
        <note>ligand shared between two neighboring subunits</note>
    </ligand>
</feature>
<feature type="binding site" description="in other chain" evidence="1">
    <location>
        <begin position="265"/>
        <end position="266"/>
    </location>
    <ligand>
        <name>ATP</name>
        <dbReference type="ChEBI" id="CHEBI:30616"/>
        <note>ligand shared between two neighboring subunits</note>
    </ligand>
</feature>
<feature type="binding site" evidence="1">
    <location>
        <position position="282"/>
    </location>
    <ligand>
        <name>ATP</name>
        <dbReference type="ChEBI" id="CHEBI:30616"/>
        <note>ligand shared between two neighboring subunits</note>
    </ligand>
</feature>
<feature type="binding site" evidence="1">
    <location>
        <position position="286"/>
    </location>
    <ligand>
        <name>ATP</name>
        <dbReference type="ChEBI" id="CHEBI:30616"/>
        <note>ligand shared between two neighboring subunits</note>
    </ligand>
</feature>
<feature type="binding site" description="in other chain" evidence="1">
    <location>
        <position position="290"/>
    </location>
    <ligand>
        <name>L-methionine</name>
        <dbReference type="ChEBI" id="CHEBI:57844"/>
        <note>ligand shared between two neighboring subunits</note>
    </ligand>
</feature>
<accession>A1KII1</accession>
<organism>
    <name type="scientific">Mycobacterium bovis (strain BCG / Pasteur 1173P2)</name>
    <dbReference type="NCBI Taxonomy" id="410289"/>
    <lineage>
        <taxon>Bacteria</taxon>
        <taxon>Bacillati</taxon>
        <taxon>Actinomycetota</taxon>
        <taxon>Actinomycetes</taxon>
        <taxon>Mycobacteriales</taxon>
        <taxon>Mycobacteriaceae</taxon>
        <taxon>Mycobacterium</taxon>
        <taxon>Mycobacterium tuberculosis complex</taxon>
    </lineage>
</organism>
<gene>
    <name evidence="1" type="primary">metK</name>
    <name type="ordered locus">BCG_1453</name>
</gene>
<proteinExistence type="inferred from homology"/>
<keyword id="KW-0067">ATP-binding</keyword>
<keyword id="KW-0963">Cytoplasm</keyword>
<keyword id="KW-0460">Magnesium</keyword>
<keyword id="KW-0479">Metal-binding</keyword>
<keyword id="KW-0547">Nucleotide-binding</keyword>
<keyword id="KW-0554">One-carbon metabolism</keyword>
<keyword id="KW-0630">Potassium</keyword>
<keyword id="KW-0808">Transferase</keyword>